<name>KATG_RHOP2</name>
<organism>
    <name type="scientific">Rhodopseudomonas palustris (strain HaA2)</name>
    <dbReference type="NCBI Taxonomy" id="316058"/>
    <lineage>
        <taxon>Bacteria</taxon>
        <taxon>Pseudomonadati</taxon>
        <taxon>Pseudomonadota</taxon>
        <taxon>Alphaproteobacteria</taxon>
        <taxon>Hyphomicrobiales</taxon>
        <taxon>Nitrobacteraceae</taxon>
        <taxon>Rhodopseudomonas</taxon>
    </lineage>
</organism>
<protein>
    <recommendedName>
        <fullName evidence="1">Catalase-peroxidase</fullName>
        <shortName evidence="1">CP</shortName>
        <ecNumber evidence="1">1.11.1.21</ecNumber>
    </recommendedName>
    <alternativeName>
        <fullName evidence="1">Peroxidase/catalase</fullName>
    </alternativeName>
</protein>
<keyword id="KW-0349">Heme</keyword>
<keyword id="KW-0376">Hydrogen peroxide</keyword>
<keyword id="KW-0408">Iron</keyword>
<keyword id="KW-0479">Metal-binding</keyword>
<keyword id="KW-0560">Oxidoreductase</keyword>
<keyword id="KW-0575">Peroxidase</keyword>
<keyword id="KW-1185">Reference proteome</keyword>
<reference key="1">
    <citation type="submission" date="2006-01" db="EMBL/GenBank/DDBJ databases">
        <title>Complete sequence of Rhodopseudomonas palustris HaA2.</title>
        <authorList>
            <consortium name="US DOE Joint Genome Institute"/>
            <person name="Copeland A."/>
            <person name="Lucas S."/>
            <person name="Lapidus A."/>
            <person name="Barry K."/>
            <person name="Detter J.C."/>
            <person name="Glavina T."/>
            <person name="Hammon N."/>
            <person name="Israni S."/>
            <person name="Pitluck S."/>
            <person name="Chain P."/>
            <person name="Malfatti S."/>
            <person name="Shin M."/>
            <person name="Vergez L."/>
            <person name="Schmutz J."/>
            <person name="Larimer F."/>
            <person name="Land M."/>
            <person name="Hauser L."/>
            <person name="Pelletier D.A."/>
            <person name="Kyrpides N."/>
            <person name="Anderson I."/>
            <person name="Oda Y."/>
            <person name="Harwood C.S."/>
            <person name="Richardson P."/>
        </authorList>
    </citation>
    <scope>NUCLEOTIDE SEQUENCE [LARGE SCALE GENOMIC DNA]</scope>
    <source>
        <strain>HaA2</strain>
    </source>
</reference>
<sequence length="732" mass="80663">MDAKTDDKDGGKCPFPHGGGRGRRNSDWWPEHLDISLLHRNSTLSDPMGKGFDYAREFESLDLDAVIKDLHALMTDSQDWWPADFGHYGGLMVRMAWHSAGTYRTTDGRGGAGAGQQRFAPLNSWPDNANLDKARRLLWPIKQKYGNKISWADLYVLTGNVALESMGFKTFGFAGGRADTWEPEELFWGPEGSWLGDERYSGERELSDPLGAVQMGLIYVNPEGPNGNPDPVAAAKDIRETFARMAMNDEETVALIAGGHTFGKTHGAGDPSLIGAEPEGGALEDQGLGWKSSFGTGFGADAITGGPEVIWTQTPTQWSNHFFENLFGFEWELDKSPAGAKQWKAKGAEANIPDPFDPTKKRLPTMLTTDLSLRFDPAYEKISRRFLENPDQFADAFARAWFKLTHRDMGPKVRYRGKLVPKEDLIWQDPIPPVDHELVGDKDIAALKAKILGSGLSVSQLVSAAFASASTYRHSDKRGGANGARIRFAPQKDWEVNQPSDLAQVLSKLEAIQKEFNGAQTDGKKVSLADLIVLGGCAAVEKAAKDAGTDIQVPFTPGRMDALEEQTDADSFKVLEPRADGFRNFIGKRKQYMSPEESLVDRAQLLNLTAPEMTALLGGLRVLGGNVGHTTHGVFTERPEKLTNDFFVNLLDMKTAWSPSATTEVVYEGRDRKTGELRWTGTRVDLIFGSHSQLRALAEVYAQSDAQPKFARDFVAAWTKVMNADRFDIVAK</sequence>
<gene>
    <name evidence="1" type="primary">katG</name>
    <name type="ordered locus">RPB_0610</name>
</gene>
<proteinExistence type="inferred from homology"/>
<accession>Q2J2I9</accession>
<dbReference type="EC" id="1.11.1.21" evidence="1"/>
<dbReference type="EMBL" id="CP000250">
    <property type="protein sequence ID" value="ABD05321.1"/>
    <property type="molecule type" value="Genomic_DNA"/>
</dbReference>
<dbReference type="RefSeq" id="WP_011439511.1">
    <property type="nucleotide sequence ID" value="NC_007778.1"/>
</dbReference>
<dbReference type="SMR" id="Q2J2I9"/>
<dbReference type="STRING" id="316058.RPB_0610"/>
<dbReference type="PeroxiBase" id="3652">
    <property type="entry name" value="RpCP01_HaA2"/>
</dbReference>
<dbReference type="KEGG" id="rpb:RPB_0610"/>
<dbReference type="eggNOG" id="COG0376">
    <property type="taxonomic scope" value="Bacteria"/>
</dbReference>
<dbReference type="HOGENOM" id="CLU_025424_2_0_5"/>
<dbReference type="OrthoDB" id="9759743at2"/>
<dbReference type="Proteomes" id="UP000008809">
    <property type="component" value="Chromosome"/>
</dbReference>
<dbReference type="GO" id="GO:0005829">
    <property type="term" value="C:cytosol"/>
    <property type="evidence" value="ECO:0007669"/>
    <property type="project" value="TreeGrafter"/>
</dbReference>
<dbReference type="GO" id="GO:0004096">
    <property type="term" value="F:catalase activity"/>
    <property type="evidence" value="ECO:0007669"/>
    <property type="project" value="UniProtKB-UniRule"/>
</dbReference>
<dbReference type="GO" id="GO:0020037">
    <property type="term" value="F:heme binding"/>
    <property type="evidence" value="ECO:0007669"/>
    <property type="project" value="InterPro"/>
</dbReference>
<dbReference type="GO" id="GO:0046872">
    <property type="term" value="F:metal ion binding"/>
    <property type="evidence" value="ECO:0007669"/>
    <property type="project" value="UniProtKB-KW"/>
</dbReference>
<dbReference type="GO" id="GO:0070301">
    <property type="term" value="P:cellular response to hydrogen peroxide"/>
    <property type="evidence" value="ECO:0007669"/>
    <property type="project" value="TreeGrafter"/>
</dbReference>
<dbReference type="GO" id="GO:0042744">
    <property type="term" value="P:hydrogen peroxide catabolic process"/>
    <property type="evidence" value="ECO:0007669"/>
    <property type="project" value="UniProtKB-KW"/>
</dbReference>
<dbReference type="CDD" id="cd00649">
    <property type="entry name" value="catalase_peroxidase_1"/>
    <property type="match status" value="1"/>
</dbReference>
<dbReference type="CDD" id="cd08200">
    <property type="entry name" value="catalase_peroxidase_2"/>
    <property type="match status" value="1"/>
</dbReference>
<dbReference type="FunFam" id="1.10.420.10:FF:000002">
    <property type="entry name" value="Catalase-peroxidase"/>
    <property type="match status" value="1"/>
</dbReference>
<dbReference type="FunFam" id="1.10.420.10:FF:000004">
    <property type="entry name" value="Catalase-peroxidase"/>
    <property type="match status" value="1"/>
</dbReference>
<dbReference type="FunFam" id="1.10.520.10:FF:000002">
    <property type="entry name" value="Catalase-peroxidase"/>
    <property type="match status" value="1"/>
</dbReference>
<dbReference type="Gene3D" id="1.10.520.10">
    <property type="match status" value="2"/>
</dbReference>
<dbReference type="Gene3D" id="1.10.420.10">
    <property type="entry name" value="Peroxidase, domain 2"/>
    <property type="match status" value="2"/>
</dbReference>
<dbReference type="HAMAP" id="MF_01961">
    <property type="entry name" value="Catal_peroxid"/>
    <property type="match status" value="1"/>
</dbReference>
<dbReference type="InterPro" id="IPR000763">
    <property type="entry name" value="Catalase_peroxidase"/>
</dbReference>
<dbReference type="InterPro" id="IPR002016">
    <property type="entry name" value="Haem_peroxidase"/>
</dbReference>
<dbReference type="InterPro" id="IPR010255">
    <property type="entry name" value="Haem_peroxidase_sf"/>
</dbReference>
<dbReference type="InterPro" id="IPR019794">
    <property type="entry name" value="Peroxidases_AS"/>
</dbReference>
<dbReference type="InterPro" id="IPR019793">
    <property type="entry name" value="Peroxidases_heam-ligand_BS"/>
</dbReference>
<dbReference type="NCBIfam" id="TIGR00198">
    <property type="entry name" value="cat_per_HPI"/>
    <property type="match status" value="1"/>
</dbReference>
<dbReference type="NCBIfam" id="NF011635">
    <property type="entry name" value="PRK15061.1"/>
    <property type="match status" value="1"/>
</dbReference>
<dbReference type="PANTHER" id="PTHR30555:SF0">
    <property type="entry name" value="CATALASE-PEROXIDASE"/>
    <property type="match status" value="1"/>
</dbReference>
<dbReference type="PANTHER" id="PTHR30555">
    <property type="entry name" value="HYDROPEROXIDASE I, BIFUNCTIONAL CATALASE-PEROXIDASE"/>
    <property type="match status" value="1"/>
</dbReference>
<dbReference type="Pfam" id="PF00141">
    <property type="entry name" value="peroxidase"/>
    <property type="match status" value="2"/>
</dbReference>
<dbReference type="PRINTS" id="PR00460">
    <property type="entry name" value="BPEROXIDASE"/>
</dbReference>
<dbReference type="PRINTS" id="PR00458">
    <property type="entry name" value="PEROXIDASE"/>
</dbReference>
<dbReference type="SUPFAM" id="SSF48113">
    <property type="entry name" value="Heme-dependent peroxidases"/>
    <property type="match status" value="2"/>
</dbReference>
<dbReference type="PROSITE" id="PS00435">
    <property type="entry name" value="PEROXIDASE_1"/>
    <property type="match status" value="1"/>
</dbReference>
<dbReference type="PROSITE" id="PS00436">
    <property type="entry name" value="PEROXIDASE_2"/>
    <property type="match status" value="1"/>
</dbReference>
<dbReference type="PROSITE" id="PS50873">
    <property type="entry name" value="PEROXIDASE_4"/>
    <property type="match status" value="1"/>
</dbReference>
<evidence type="ECO:0000255" key="1">
    <source>
        <dbReference type="HAMAP-Rule" id="MF_01961"/>
    </source>
</evidence>
<evidence type="ECO:0000256" key="2">
    <source>
        <dbReference type="SAM" id="MobiDB-lite"/>
    </source>
</evidence>
<feature type="chain" id="PRO_0000354896" description="Catalase-peroxidase">
    <location>
        <begin position="1"/>
        <end position="732"/>
    </location>
</feature>
<feature type="region of interest" description="Disordered" evidence="2">
    <location>
        <begin position="1"/>
        <end position="24"/>
    </location>
</feature>
<feature type="compositionally biased region" description="Basic and acidic residues" evidence="2">
    <location>
        <begin position="1"/>
        <end position="11"/>
    </location>
</feature>
<feature type="active site" description="Proton acceptor" evidence="1">
    <location>
        <position position="98"/>
    </location>
</feature>
<feature type="binding site" description="axial binding residue" evidence="1">
    <location>
        <position position="260"/>
    </location>
    <ligand>
        <name>heme b</name>
        <dbReference type="ChEBI" id="CHEBI:60344"/>
    </ligand>
    <ligandPart>
        <name>Fe</name>
        <dbReference type="ChEBI" id="CHEBI:18248"/>
    </ligandPart>
</feature>
<feature type="site" description="Transition state stabilizer" evidence="1">
    <location>
        <position position="94"/>
    </location>
</feature>
<feature type="cross-link" description="Tryptophyl-tyrosyl-methioninium (Trp-Tyr) (with M-245)" evidence="1">
    <location>
        <begin position="97"/>
        <end position="219"/>
    </location>
</feature>
<feature type="cross-link" description="Tryptophyl-tyrosyl-methioninium (Tyr-Met) (with W-97)" evidence="1">
    <location>
        <begin position="219"/>
        <end position="245"/>
    </location>
</feature>
<comment type="function">
    <text evidence="1">Bifunctional enzyme with both catalase and broad-spectrum peroxidase activity.</text>
</comment>
<comment type="catalytic activity">
    <reaction evidence="1">
        <text>H2O2 + AH2 = A + 2 H2O</text>
        <dbReference type="Rhea" id="RHEA:30275"/>
        <dbReference type="ChEBI" id="CHEBI:13193"/>
        <dbReference type="ChEBI" id="CHEBI:15377"/>
        <dbReference type="ChEBI" id="CHEBI:16240"/>
        <dbReference type="ChEBI" id="CHEBI:17499"/>
        <dbReference type="EC" id="1.11.1.21"/>
    </reaction>
</comment>
<comment type="catalytic activity">
    <reaction evidence="1">
        <text>2 H2O2 = O2 + 2 H2O</text>
        <dbReference type="Rhea" id="RHEA:20309"/>
        <dbReference type="ChEBI" id="CHEBI:15377"/>
        <dbReference type="ChEBI" id="CHEBI:15379"/>
        <dbReference type="ChEBI" id="CHEBI:16240"/>
        <dbReference type="EC" id="1.11.1.21"/>
    </reaction>
</comment>
<comment type="cofactor">
    <cofactor evidence="1">
        <name>heme b</name>
        <dbReference type="ChEBI" id="CHEBI:60344"/>
    </cofactor>
    <text evidence="1">Binds 1 heme b (iron(II)-protoporphyrin IX) group per dimer.</text>
</comment>
<comment type="subunit">
    <text evidence="1">Homodimer or homotetramer.</text>
</comment>
<comment type="PTM">
    <text evidence="1">Formation of the three residue Trp-Tyr-Met cross-link is important for the catalase, but not the peroxidase activity of the enzyme.</text>
</comment>
<comment type="similarity">
    <text evidence="1">Belongs to the peroxidase family. Peroxidase/catalase subfamily.</text>
</comment>